<name>TUSA_SHIBS</name>
<organism>
    <name type="scientific">Shigella boydii serotype 4 (strain Sb227)</name>
    <dbReference type="NCBI Taxonomy" id="300268"/>
    <lineage>
        <taxon>Bacteria</taxon>
        <taxon>Pseudomonadati</taxon>
        <taxon>Pseudomonadota</taxon>
        <taxon>Gammaproteobacteria</taxon>
        <taxon>Enterobacterales</taxon>
        <taxon>Enterobacteriaceae</taxon>
        <taxon>Shigella</taxon>
    </lineage>
</organism>
<keyword id="KW-0963">Cytoplasm</keyword>
<keyword id="KW-0819">tRNA processing</keyword>
<comment type="function">
    <text evidence="1">Sulfur carrier protein involved in sulfur trafficking in the cell. Part of a sulfur-relay system required for 2-thiolation during synthesis of 2-thiouridine of the modified wobble base 5-methylaminomethyl-2-thiouridine (mnm(5)s(2)U) in tRNA. Interacts with IscS and stimulates its cysteine desulfurase activity. Accepts an activated sulfur from IscS, which is then transferred to TusD, and thus determines the direction of sulfur flow from IscS to 2-thiouridine formation. Also appears to be involved in sulfur transfer for the biosynthesis of molybdopterin.</text>
</comment>
<comment type="pathway">
    <text evidence="1">tRNA modification.</text>
</comment>
<comment type="subunit">
    <text evidence="1">Interacts with IscS.</text>
</comment>
<comment type="subcellular location">
    <subcellularLocation>
        <location evidence="1">Cytoplasm</location>
    </subcellularLocation>
</comment>
<comment type="similarity">
    <text evidence="1">Belongs to the sulfur carrier protein TusA family.</text>
</comment>
<feature type="chain" id="PRO_0000234124" description="Sulfur carrier protein TusA">
    <location>
        <begin position="1"/>
        <end position="81"/>
    </location>
</feature>
<feature type="active site" description="Cysteine persulfide intermediate" evidence="1">
    <location>
        <position position="19"/>
    </location>
</feature>
<proteinExistence type="inferred from homology"/>
<protein>
    <recommendedName>
        <fullName evidence="1">Sulfur carrier protein TusA</fullName>
    </recommendedName>
    <alternativeName>
        <fullName evidence="1">Sulfur mediator TusA</fullName>
    </alternativeName>
    <alternativeName>
        <fullName evidence="1">Sulfur transfer protein TusA</fullName>
    </alternativeName>
    <alternativeName>
        <fullName evidence="1">tRNA 2-thiouridine synthesizing protein A</fullName>
    </alternativeName>
</protein>
<dbReference type="EMBL" id="CP000036">
    <property type="protein sequence ID" value="ABB67952.1"/>
    <property type="molecule type" value="Genomic_DNA"/>
</dbReference>
<dbReference type="RefSeq" id="WP_000130621.1">
    <property type="nucleotide sequence ID" value="NC_007613.1"/>
</dbReference>
<dbReference type="SMR" id="Q31VF6"/>
<dbReference type="GeneID" id="93778521"/>
<dbReference type="KEGG" id="sbo:SBO_3467"/>
<dbReference type="HOGENOM" id="CLU_165255_5_0_6"/>
<dbReference type="Proteomes" id="UP000007067">
    <property type="component" value="Chromosome"/>
</dbReference>
<dbReference type="GO" id="GO:0005737">
    <property type="term" value="C:cytoplasm"/>
    <property type="evidence" value="ECO:0007669"/>
    <property type="project" value="UniProtKB-SubCell"/>
</dbReference>
<dbReference type="GO" id="GO:0097163">
    <property type="term" value="F:sulfur carrier activity"/>
    <property type="evidence" value="ECO:0007669"/>
    <property type="project" value="UniProtKB-UniRule"/>
</dbReference>
<dbReference type="GO" id="GO:0002143">
    <property type="term" value="P:tRNA wobble position uridine thiolation"/>
    <property type="evidence" value="ECO:0007669"/>
    <property type="project" value="InterPro"/>
</dbReference>
<dbReference type="CDD" id="cd03423">
    <property type="entry name" value="SirA"/>
    <property type="match status" value="1"/>
</dbReference>
<dbReference type="FunFam" id="3.30.110.40:FF:000002">
    <property type="entry name" value="Sulfur carrier protein TusA"/>
    <property type="match status" value="1"/>
</dbReference>
<dbReference type="Gene3D" id="3.30.110.40">
    <property type="entry name" value="TusA-like domain"/>
    <property type="match status" value="1"/>
</dbReference>
<dbReference type="HAMAP" id="MF_00413">
    <property type="entry name" value="Thiourid_synth_A"/>
    <property type="match status" value="1"/>
</dbReference>
<dbReference type="InterPro" id="IPR022931">
    <property type="entry name" value="Sulphur_carrier_TusA"/>
</dbReference>
<dbReference type="InterPro" id="IPR001455">
    <property type="entry name" value="TusA-like"/>
</dbReference>
<dbReference type="InterPro" id="IPR036868">
    <property type="entry name" value="TusA-like_sf"/>
</dbReference>
<dbReference type="NCBIfam" id="NF001423">
    <property type="entry name" value="PRK00299.1"/>
    <property type="match status" value="1"/>
</dbReference>
<dbReference type="PANTHER" id="PTHR33279:SF2">
    <property type="entry name" value="SULFUR CARRIER PROTEIN TUSA"/>
    <property type="match status" value="1"/>
</dbReference>
<dbReference type="PANTHER" id="PTHR33279">
    <property type="entry name" value="SULFUR CARRIER PROTEIN YEDF-RELATED"/>
    <property type="match status" value="1"/>
</dbReference>
<dbReference type="Pfam" id="PF01206">
    <property type="entry name" value="TusA"/>
    <property type="match status" value="1"/>
</dbReference>
<dbReference type="SUPFAM" id="SSF64307">
    <property type="entry name" value="SirA-like"/>
    <property type="match status" value="1"/>
</dbReference>
<dbReference type="PROSITE" id="PS01148">
    <property type="entry name" value="UPF0033"/>
    <property type="match status" value="1"/>
</dbReference>
<evidence type="ECO:0000255" key="1">
    <source>
        <dbReference type="HAMAP-Rule" id="MF_00413"/>
    </source>
</evidence>
<reference key="1">
    <citation type="journal article" date="2005" name="Nucleic Acids Res.">
        <title>Genome dynamics and diversity of Shigella species, the etiologic agents of bacillary dysentery.</title>
        <authorList>
            <person name="Yang F."/>
            <person name="Yang J."/>
            <person name="Zhang X."/>
            <person name="Chen L."/>
            <person name="Jiang Y."/>
            <person name="Yan Y."/>
            <person name="Tang X."/>
            <person name="Wang J."/>
            <person name="Xiong Z."/>
            <person name="Dong J."/>
            <person name="Xue Y."/>
            <person name="Zhu Y."/>
            <person name="Xu X."/>
            <person name="Sun L."/>
            <person name="Chen S."/>
            <person name="Nie H."/>
            <person name="Peng J."/>
            <person name="Xu J."/>
            <person name="Wang Y."/>
            <person name="Yuan Z."/>
            <person name="Wen Y."/>
            <person name="Yao Z."/>
            <person name="Shen Y."/>
            <person name="Qiang B."/>
            <person name="Hou Y."/>
            <person name="Yu J."/>
            <person name="Jin Q."/>
        </authorList>
    </citation>
    <scope>NUCLEOTIDE SEQUENCE [LARGE SCALE GENOMIC DNA]</scope>
    <source>
        <strain>Sb227</strain>
    </source>
</reference>
<accession>Q31VF6</accession>
<gene>
    <name evidence="1" type="primary">tusA</name>
    <name type="ordered locus">SBO_3467</name>
</gene>
<sequence>MTDLFSSPDHTLDALGLRCPEPVMMVRKTVRNMQPGETLLIIADDPATTRDIPGFCTFMEHELVAKETDGLPYRYLIRKGG</sequence>